<reference key="1">
    <citation type="journal article" date="2002" name="Nature">
        <title>The genome sequence of Schizosaccharomyces pombe.</title>
        <authorList>
            <person name="Wood V."/>
            <person name="Gwilliam R."/>
            <person name="Rajandream M.A."/>
            <person name="Lyne M.H."/>
            <person name="Lyne R."/>
            <person name="Stewart A."/>
            <person name="Sgouros J.G."/>
            <person name="Peat N."/>
            <person name="Hayles J."/>
            <person name="Baker S.G."/>
            <person name="Basham D."/>
            <person name="Bowman S."/>
            <person name="Brooks K."/>
            <person name="Brown D."/>
            <person name="Brown S."/>
            <person name="Chillingworth T."/>
            <person name="Churcher C.M."/>
            <person name="Collins M."/>
            <person name="Connor R."/>
            <person name="Cronin A."/>
            <person name="Davis P."/>
            <person name="Feltwell T."/>
            <person name="Fraser A."/>
            <person name="Gentles S."/>
            <person name="Goble A."/>
            <person name="Hamlin N."/>
            <person name="Harris D.E."/>
            <person name="Hidalgo J."/>
            <person name="Hodgson G."/>
            <person name="Holroyd S."/>
            <person name="Hornsby T."/>
            <person name="Howarth S."/>
            <person name="Huckle E.J."/>
            <person name="Hunt S."/>
            <person name="Jagels K."/>
            <person name="James K.D."/>
            <person name="Jones L."/>
            <person name="Jones M."/>
            <person name="Leather S."/>
            <person name="McDonald S."/>
            <person name="McLean J."/>
            <person name="Mooney P."/>
            <person name="Moule S."/>
            <person name="Mungall K.L."/>
            <person name="Murphy L.D."/>
            <person name="Niblett D."/>
            <person name="Odell C."/>
            <person name="Oliver K."/>
            <person name="O'Neil S."/>
            <person name="Pearson D."/>
            <person name="Quail M.A."/>
            <person name="Rabbinowitsch E."/>
            <person name="Rutherford K.M."/>
            <person name="Rutter S."/>
            <person name="Saunders D."/>
            <person name="Seeger K."/>
            <person name="Sharp S."/>
            <person name="Skelton J."/>
            <person name="Simmonds M.N."/>
            <person name="Squares R."/>
            <person name="Squares S."/>
            <person name="Stevens K."/>
            <person name="Taylor K."/>
            <person name="Taylor R.G."/>
            <person name="Tivey A."/>
            <person name="Walsh S.V."/>
            <person name="Warren T."/>
            <person name="Whitehead S."/>
            <person name="Woodward J.R."/>
            <person name="Volckaert G."/>
            <person name="Aert R."/>
            <person name="Robben J."/>
            <person name="Grymonprez B."/>
            <person name="Weltjens I."/>
            <person name="Vanstreels E."/>
            <person name="Rieger M."/>
            <person name="Schaefer M."/>
            <person name="Mueller-Auer S."/>
            <person name="Gabel C."/>
            <person name="Fuchs M."/>
            <person name="Duesterhoeft A."/>
            <person name="Fritzc C."/>
            <person name="Holzer E."/>
            <person name="Moestl D."/>
            <person name="Hilbert H."/>
            <person name="Borzym K."/>
            <person name="Langer I."/>
            <person name="Beck A."/>
            <person name="Lehrach H."/>
            <person name="Reinhardt R."/>
            <person name="Pohl T.M."/>
            <person name="Eger P."/>
            <person name="Zimmermann W."/>
            <person name="Wedler H."/>
            <person name="Wambutt R."/>
            <person name="Purnelle B."/>
            <person name="Goffeau A."/>
            <person name="Cadieu E."/>
            <person name="Dreano S."/>
            <person name="Gloux S."/>
            <person name="Lelaure V."/>
            <person name="Mottier S."/>
            <person name="Galibert F."/>
            <person name="Aves S.J."/>
            <person name="Xiang Z."/>
            <person name="Hunt C."/>
            <person name="Moore K."/>
            <person name="Hurst S.M."/>
            <person name="Lucas M."/>
            <person name="Rochet M."/>
            <person name="Gaillardin C."/>
            <person name="Tallada V.A."/>
            <person name="Garzon A."/>
            <person name="Thode G."/>
            <person name="Daga R.R."/>
            <person name="Cruzado L."/>
            <person name="Jimenez J."/>
            <person name="Sanchez M."/>
            <person name="del Rey F."/>
            <person name="Benito J."/>
            <person name="Dominguez A."/>
            <person name="Revuelta J.L."/>
            <person name="Moreno S."/>
            <person name="Armstrong J."/>
            <person name="Forsburg S.L."/>
            <person name="Cerutti L."/>
            <person name="Lowe T."/>
            <person name="McCombie W.R."/>
            <person name="Paulsen I."/>
            <person name="Potashkin J."/>
            <person name="Shpakovski G.V."/>
            <person name="Ussery D."/>
            <person name="Barrell B.G."/>
            <person name="Nurse P."/>
        </authorList>
    </citation>
    <scope>NUCLEOTIDE SEQUENCE [LARGE SCALE GENOMIC DNA]</scope>
    <source>
        <strain>972 / ATCC 24843</strain>
    </source>
</reference>
<sequence>MKVPAYWKPREPKNALTCDPPVPYDLQSSYQWQSILEHDTCYAAEVFDKMMIELVYHPERTSSVIMRTDIILDSQEDDSILNKQKSVFENLDERYQISRWIDRRIIPRNTNLDATMDQTVVVLHEKLENDRILMYLPHLDKSLEQPYNHLPYYHPAVAGIAFHYKGSSVEVLYLVEKDFQRELSSRLLRTAHMLLLVLHKHCKGAVEGYQKRMLHDTVVERNKFQDTYVILKDKYAKQLVDNWVEKTDPGKHVFEDLAIAAFLIELWKQTYSSNKEFSFVDVGCGNGLLVYLLLMEGYNGYGFDARKRKSWETYPLWVQVKLYEKVLVPYFLHDFETKIPFPQLPAGFTMSAANIHDGRFSENSFLIGNHADELTPYLPILARLNQKCYFMSIPCCVHDLTGAKISWALPKPRNPKHGGRYAMYIEWLMQLSEEVGWNIEVEPLRIPSTRNYALIGRKLLSNDLLHSSLSTDALYDIVEKNHGSQGFFVHAMQVAAANSRSH</sequence>
<dbReference type="EC" id="2.1.1.211"/>
<dbReference type="EMBL" id="CU329672">
    <property type="protein sequence ID" value="CAA20370.1"/>
    <property type="molecule type" value="Genomic_DNA"/>
</dbReference>
<dbReference type="PIR" id="T41541">
    <property type="entry name" value="T41541"/>
</dbReference>
<dbReference type="RefSeq" id="NP_588271.1">
    <property type="nucleotide sequence ID" value="NM_001023261.2"/>
</dbReference>
<dbReference type="BioGRID" id="275289">
    <property type="interactions" value="2"/>
</dbReference>
<dbReference type="FunCoup" id="O74516">
    <property type="interactions" value="37"/>
</dbReference>
<dbReference type="STRING" id="284812.O74516"/>
<dbReference type="PaxDb" id="4896-SPCC663.10.1"/>
<dbReference type="EnsemblFungi" id="SPCC663.10.1">
    <property type="protein sequence ID" value="SPCC663.10.1:pep"/>
    <property type="gene ID" value="SPCC663.10"/>
</dbReference>
<dbReference type="GeneID" id="2538705"/>
<dbReference type="KEGG" id="spo:2538705"/>
<dbReference type="PomBase" id="SPCC663.10">
    <property type="gene designation" value="trm44"/>
</dbReference>
<dbReference type="VEuPathDB" id="FungiDB:SPCC663.10"/>
<dbReference type="eggNOG" id="KOG3790">
    <property type="taxonomic scope" value="Eukaryota"/>
</dbReference>
<dbReference type="HOGENOM" id="CLU_018580_2_0_1"/>
<dbReference type="InParanoid" id="O74516"/>
<dbReference type="OMA" id="IREPNIN"/>
<dbReference type="PhylomeDB" id="O74516"/>
<dbReference type="PRO" id="PR:O74516"/>
<dbReference type="Proteomes" id="UP000002485">
    <property type="component" value="Chromosome III"/>
</dbReference>
<dbReference type="GO" id="GO:0005829">
    <property type="term" value="C:cytosol"/>
    <property type="evidence" value="ECO:0007005"/>
    <property type="project" value="PomBase"/>
</dbReference>
<dbReference type="GO" id="GO:0005634">
    <property type="term" value="C:nucleus"/>
    <property type="evidence" value="ECO:0007005"/>
    <property type="project" value="PomBase"/>
</dbReference>
<dbReference type="GO" id="GO:0016300">
    <property type="term" value="F:tRNA (uridine) methyltransferase activity"/>
    <property type="evidence" value="ECO:0000318"/>
    <property type="project" value="GO_Central"/>
</dbReference>
<dbReference type="GO" id="GO:0141101">
    <property type="term" value="F:tRNA(Ser) (uridine(44)-2'-O-)-methyltransferase activity"/>
    <property type="evidence" value="ECO:0007669"/>
    <property type="project" value="UniProtKB-EC"/>
</dbReference>
<dbReference type="GO" id="GO:0030488">
    <property type="term" value="P:tRNA methylation"/>
    <property type="evidence" value="ECO:0000318"/>
    <property type="project" value="GO_Central"/>
</dbReference>
<dbReference type="InterPro" id="IPR029063">
    <property type="entry name" value="SAM-dependent_MTases_sf"/>
</dbReference>
<dbReference type="InterPro" id="IPR011671">
    <property type="entry name" value="tRNA_uracil_MeTrfase"/>
</dbReference>
<dbReference type="PANTHER" id="PTHR21210">
    <property type="entry name" value="TRNA (URACIL-O(2)-)-METHYLTRANSFERASE-RELATED"/>
    <property type="match status" value="1"/>
</dbReference>
<dbReference type="PANTHER" id="PTHR21210:SF0">
    <property type="entry name" value="TRNA (URACIL-O(2)-)-METHYLTRANSFERASE-RELATED"/>
    <property type="match status" value="1"/>
</dbReference>
<dbReference type="Pfam" id="PF07757">
    <property type="entry name" value="AdoMet_MTase"/>
    <property type="match status" value="1"/>
</dbReference>
<dbReference type="SUPFAM" id="SSF53335">
    <property type="entry name" value="S-adenosyl-L-methionine-dependent methyltransferases"/>
    <property type="match status" value="1"/>
</dbReference>
<organism>
    <name type="scientific">Schizosaccharomyces pombe (strain 972 / ATCC 24843)</name>
    <name type="common">Fission yeast</name>
    <dbReference type="NCBI Taxonomy" id="284812"/>
    <lineage>
        <taxon>Eukaryota</taxon>
        <taxon>Fungi</taxon>
        <taxon>Dikarya</taxon>
        <taxon>Ascomycota</taxon>
        <taxon>Taphrinomycotina</taxon>
        <taxon>Schizosaccharomycetes</taxon>
        <taxon>Schizosaccharomycetales</taxon>
        <taxon>Schizosaccharomycetaceae</taxon>
        <taxon>Schizosaccharomyces</taxon>
    </lineage>
</organism>
<feature type="chain" id="PRO_0000249909" description="tRNA (uracil-O(2)-)-methyltransferase">
    <location>
        <begin position="1"/>
        <end position="502"/>
    </location>
</feature>
<evidence type="ECO:0000250" key="1"/>
<evidence type="ECO:0000305" key="2"/>
<comment type="function">
    <text evidence="1">Probable adenosyl-L-methionine (AdoMet)-dependent tRNA (uracil-O(2)-)-methyltransferase.</text>
</comment>
<comment type="catalytic activity">
    <reaction>
        <text>uridine(44) in tRNA(Ser) + S-adenosyl-L-methionine = 2'-O-methyluridine(44) in tRNA(Ser) + S-adenosyl-L-homocysteine + H(+)</text>
        <dbReference type="Rhea" id="RHEA:43100"/>
        <dbReference type="Rhea" id="RHEA-COMP:10339"/>
        <dbReference type="Rhea" id="RHEA-COMP:10340"/>
        <dbReference type="ChEBI" id="CHEBI:15378"/>
        <dbReference type="ChEBI" id="CHEBI:57856"/>
        <dbReference type="ChEBI" id="CHEBI:59789"/>
        <dbReference type="ChEBI" id="CHEBI:65315"/>
        <dbReference type="ChEBI" id="CHEBI:74478"/>
        <dbReference type="EC" id="2.1.1.211"/>
    </reaction>
</comment>
<comment type="subcellular location">
    <subcellularLocation>
        <location evidence="1">Cytoplasm</location>
    </subcellularLocation>
</comment>
<comment type="similarity">
    <text evidence="2">Belongs to the TRM44 family.</text>
</comment>
<gene>
    <name type="primary">trm44</name>
    <name type="ORF">SPCC663.10</name>
</gene>
<keyword id="KW-0963">Cytoplasm</keyword>
<keyword id="KW-0489">Methyltransferase</keyword>
<keyword id="KW-1185">Reference proteome</keyword>
<keyword id="KW-0949">S-adenosyl-L-methionine</keyword>
<keyword id="KW-0808">Transferase</keyword>
<keyword id="KW-0819">tRNA processing</keyword>
<protein>
    <recommendedName>
        <fullName>tRNA (uracil-O(2)-)-methyltransferase</fullName>
        <ecNumber>2.1.1.211</ecNumber>
    </recommendedName>
</protein>
<name>TRM44_SCHPO</name>
<accession>O74516</accession>
<proteinExistence type="inferred from homology"/>